<proteinExistence type="inferred from homology"/>
<organism>
    <name type="scientific">Pseudomonas putida (strain W619)</name>
    <dbReference type="NCBI Taxonomy" id="390235"/>
    <lineage>
        <taxon>Bacteria</taxon>
        <taxon>Pseudomonadati</taxon>
        <taxon>Pseudomonadota</taxon>
        <taxon>Gammaproteobacteria</taxon>
        <taxon>Pseudomonadales</taxon>
        <taxon>Pseudomonadaceae</taxon>
        <taxon>Pseudomonas</taxon>
    </lineage>
</organism>
<accession>B1J4E2</accession>
<protein>
    <recommendedName>
        <fullName evidence="1">DNA repair protein RecO</fullName>
    </recommendedName>
    <alternativeName>
        <fullName evidence="1">Recombination protein O</fullName>
    </alternativeName>
</protein>
<name>RECO_PSEPW</name>
<comment type="function">
    <text evidence="1">Involved in DNA repair and RecF pathway recombination.</text>
</comment>
<comment type="similarity">
    <text evidence="1">Belongs to the RecO family.</text>
</comment>
<gene>
    <name evidence="1" type="primary">recO</name>
    <name type="ordered locus">PputW619_1075</name>
</gene>
<evidence type="ECO:0000255" key="1">
    <source>
        <dbReference type="HAMAP-Rule" id="MF_00201"/>
    </source>
</evidence>
<reference key="1">
    <citation type="submission" date="2008-02" db="EMBL/GenBank/DDBJ databases">
        <title>Complete sequence of Pseudomonas putida W619.</title>
        <authorList>
            <person name="Copeland A."/>
            <person name="Lucas S."/>
            <person name="Lapidus A."/>
            <person name="Barry K."/>
            <person name="Detter J.C."/>
            <person name="Glavina del Rio T."/>
            <person name="Dalin E."/>
            <person name="Tice H."/>
            <person name="Pitluck S."/>
            <person name="Chain P."/>
            <person name="Malfatti S."/>
            <person name="Shin M."/>
            <person name="Vergez L."/>
            <person name="Schmutz J."/>
            <person name="Larimer F."/>
            <person name="Land M."/>
            <person name="Hauser L."/>
            <person name="Kyrpides N."/>
            <person name="Kim E."/>
            <person name="Taghavi S."/>
            <person name="Vangronsveld D."/>
            <person name="van der Lelie D."/>
            <person name="Richardson P."/>
        </authorList>
    </citation>
    <scope>NUCLEOTIDE SEQUENCE [LARGE SCALE GENOMIC DNA]</scope>
    <source>
        <strain>W619</strain>
    </source>
</reference>
<keyword id="KW-0227">DNA damage</keyword>
<keyword id="KW-0233">DNA recombination</keyword>
<keyword id="KW-0234">DNA repair</keyword>
<feature type="chain" id="PRO_1000099399" description="DNA repair protein RecO">
    <location>
        <begin position="1"/>
        <end position="227"/>
    </location>
</feature>
<dbReference type="EMBL" id="CP000949">
    <property type="protein sequence ID" value="ACA71580.1"/>
    <property type="molecule type" value="Genomic_DNA"/>
</dbReference>
<dbReference type="SMR" id="B1J4E2"/>
<dbReference type="STRING" id="390235.PputW619_1075"/>
<dbReference type="KEGG" id="ppw:PputW619_1075"/>
<dbReference type="eggNOG" id="COG1381">
    <property type="taxonomic scope" value="Bacteria"/>
</dbReference>
<dbReference type="HOGENOM" id="CLU_066645_1_0_6"/>
<dbReference type="OrthoDB" id="9804792at2"/>
<dbReference type="GO" id="GO:0043590">
    <property type="term" value="C:bacterial nucleoid"/>
    <property type="evidence" value="ECO:0007669"/>
    <property type="project" value="TreeGrafter"/>
</dbReference>
<dbReference type="GO" id="GO:0006310">
    <property type="term" value="P:DNA recombination"/>
    <property type="evidence" value="ECO:0007669"/>
    <property type="project" value="UniProtKB-UniRule"/>
</dbReference>
<dbReference type="GO" id="GO:0006302">
    <property type="term" value="P:double-strand break repair"/>
    <property type="evidence" value="ECO:0007669"/>
    <property type="project" value="TreeGrafter"/>
</dbReference>
<dbReference type="Gene3D" id="2.40.50.140">
    <property type="entry name" value="Nucleic acid-binding proteins"/>
    <property type="match status" value="1"/>
</dbReference>
<dbReference type="Gene3D" id="1.20.1440.120">
    <property type="entry name" value="Recombination protein O, C-terminal domain"/>
    <property type="match status" value="1"/>
</dbReference>
<dbReference type="HAMAP" id="MF_00201">
    <property type="entry name" value="RecO"/>
    <property type="match status" value="1"/>
</dbReference>
<dbReference type="InterPro" id="IPR037278">
    <property type="entry name" value="ARFGAP/RecO"/>
</dbReference>
<dbReference type="InterPro" id="IPR022572">
    <property type="entry name" value="DNA_rep/recomb_RecO_N"/>
</dbReference>
<dbReference type="InterPro" id="IPR012340">
    <property type="entry name" value="NA-bd_OB-fold"/>
</dbReference>
<dbReference type="InterPro" id="IPR003717">
    <property type="entry name" value="RecO"/>
</dbReference>
<dbReference type="InterPro" id="IPR042242">
    <property type="entry name" value="RecO_C"/>
</dbReference>
<dbReference type="NCBIfam" id="TIGR00613">
    <property type="entry name" value="reco"/>
    <property type="match status" value="1"/>
</dbReference>
<dbReference type="PANTHER" id="PTHR33991">
    <property type="entry name" value="DNA REPAIR PROTEIN RECO"/>
    <property type="match status" value="1"/>
</dbReference>
<dbReference type="PANTHER" id="PTHR33991:SF1">
    <property type="entry name" value="DNA REPAIR PROTEIN RECO"/>
    <property type="match status" value="1"/>
</dbReference>
<dbReference type="Pfam" id="PF02565">
    <property type="entry name" value="RecO_C"/>
    <property type="match status" value="1"/>
</dbReference>
<dbReference type="Pfam" id="PF11967">
    <property type="entry name" value="RecO_N"/>
    <property type="match status" value="1"/>
</dbReference>
<dbReference type="SUPFAM" id="SSF57863">
    <property type="entry name" value="ArfGap/RecO-like zinc finger"/>
    <property type="match status" value="1"/>
</dbReference>
<dbReference type="SUPFAM" id="SSF50249">
    <property type="entry name" value="Nucleic acid-binding proteins"/>
    <property type="match status" value="1"/>
</dbReference>
<sequence>MEQPVGQPAYVLHSRAYKETSALVDFFTPQGRVRAVLRRARGKGGSLVRPFVPLEVELRGRSELKNVGRLDSMGIAAWLHGDALFSGLYLNELLMRLLPAEAPQPELFEHYALTLQALAAGRPLEPLLRSFEWRLLEDLGYAFALDHDVSDEPIEADGLYRLQVDAGLERVYLVQPGLFNGAELLALAQADWDAPGALLAAKRLMRQALAVHLGPKPLVSRELFRKR</sequence>